<proteinExistence type="inferred from homology"/>
<protein>
    <recommendedName>
        <fullName evidence="1">Ribonuclease 3</fullName>
        <ecNumber evidence="1">3.1.26.3</ecNumber>
    </recommendedName>
    <alternativeName>
        <fullName evidence="1">Ribonuclease III</fullName>
        <shortName evidence="1">RNase III</shortName>
    </alternativeName>
</protein>
<sequence length="239" mass="27282">MKNKRSQNSPYVTPNNPYTTLEKALGYSFKDKRLLEQALTHKSCKLALNNERLEFLGDAVLGLVIGELLYHKFYQYDEGKLSKLRAAIVSAHGFTKLAKAIALQDYLRVSSSEEISKGREKPSILSSAFEALMAGVYLEAGLAKVRKIIQNLLNRAYKRLDLEHLFMDYKTALQELTQAQFCVIPTYQLLQEKGPDHHKEFEMALYIQDKMYATAKGKSKKEAEQQCAYYALQKLKEAK</sequence>
<name>RNC_HELPG</name>
<evidence type="ECO:0000255" key="1">
    <source>
        <dbReference type="HAMAP-Rule" id="MF_00104"/>
    </source>
</evidence>
<feature type="chain" id="PRO_1000094113" description="Ribonuclease 3">
    <location>
        <begin position="1"/>
        <end position="239"/>
    </location>
</feature>
<feature type="domain" description="RNase III" evidence="1">
    <location>
        <begin position="18"/>
        <end position="141"/>
    </location>
</feature>
<feature type="domain" description="DRBM" evidence="1">
    <location>
        <begin position="168"/>
        <end position="237"/>
    </location>
</feature>
<feature type="active site" evidence="1">
    <location>
        <position position="58"/>
    </location>
</feature>
<feature type="active site" evidence="1">
    <location>
        <position position="130"/>
    </location>
</feature>
<feature type="binding site" evidence="1">
    <location>
        <position position="54"/>
    </location>
    <ligand>
        <name>Mg(2+)</name>
        <dbReference type="ChEBI" id="CHEBI:18420"/>
    </ligand>
</feature>
<feature type="binding site" evidence="1">
    <location>
        <position position="127"/>
    </location>
    <ligand>
        <name>Mg(2+)</name>
        <dbReference type="ChEBI" id="CHEBI:18420"/>
    </ligand>
</feature>
<feature type="binding site" evidence="1">
    <location>
        <position position="130"/>
    </location>
    <ligand>
        <name>Mg(2+)</name>
        <dbReference type="ChEBI" id="CHEBI:18420"/>
    </ligand>
</feature>
<gene>
    <name evidence="1" type="primary">rnc</name>
    <name type="ordered locus">HPG27_624</name>
</gene>
<reference key="1">
    <citation type="journal article" date="2009" name="J. Bacteriol.">
        <title>The complete genome sequence of Helicobacter pylori strain G27.</title>
        <authorList>
            <person name="Baltrus D.A."/>
            <person name="Amieva M.R."/>
            <person name="Covacci A."/>
            <person name="Lowe T.M."/>
            <person name="Merrell D.S."/>
            <person name="Ottemann K.M."/>
            <person name="Stein M."/>
            <person name="Salama N.R."/>
            <person name="Guillemin K."/>
        </authorList>
    </citation>
    <scope>NUCLEOTIDE SEQUENCE [LARGE SCALE GENOMIC DNA]</scope>
    <source>
        <strain>G27</strain>
    </source>
</reference>
<dbReference type="EC" id="3.1.26.3" evidence="1"/>
<dbReference type="EMBL" id="CP001173">
    <property type="protein sequence ID" value="ACI27384.1"/>
    <property type="molecule type" value="Genomic_DNA"/>
</dbReference>
<dbReference type="RefSeq" id="WP_012552448.1">
    <property type="nucleotide sequence ID" value="NC_011333.1"/>
</dbReference>
<dbReference type="SMR" id="B5Z735"/>
<dbReference type="KEGG" id="hpg:HPG27_624"/>
<dbReference type="HOGENOM" id="CLU_000907_1_3_7"/>
<dbReference type="Proteomes" id="UP000001735">
    <property type="component" value="Chromosome"/>
</dbReference>
<dbReference type="GO" id="GO:0005737">
    <property type="term" value="C:cytoplasm"/>
    <property type="evidence" value="ECO:0007669"/>
    <property type="project" value="UniProtKB-SubCell"/>
</dbReference>
<dbReference type="GO" id="GO:0003725">
    <property type="term" value="F:double-stranded RNA binding"/>
    <property type="evidence" value="ECO:0007669"/>
    <property type="project" value="TreeGrafter"/>
</dbReference>
<dbReference type="GO" id="GO:0046872">
    <property type="term" value="F:metal ion binding"/>
    <property type="evidence" value="ECO:0007669"/>
    <property type="project" value="UniProtKB-KW"/>
</dbReference>
<dbReference type="GO" id="GO:0004525">
    <property type="term" value="F:ribonuclease III activity"/>
    <property type="evidence" value="ECO:0007669"/>
    <property type="project" value="UniProtKB-UniRule"/>
</dbReference>
<dbReference type="GO" id="GO:0019843">
    <property type="term" value="F:rRNA binding"/>
    <property type="evidence" value="ECO:0007669"/>
    <property type="project" value="UniProtKB-KW"/>
</dbReference>
<dbReference type="GO" id="GO:0006397">
    <property type="term" value="P:mRNA processing"/>
    <property type="evidence" value="ECO:0007669"/>
    <property type="project" value="UniProtKB-UniRule"/>
</dbReference>
<dbReference type="GO" id="GO:0010468">
    <property type="term" value="P:regulation of gene expression"/>
    <property type="evidence" value="ECO:0007669"/>
    <property type="project" value="TreeGrafter"/>
</dbReference>
<dbReference type="GO" id="GO:0006364">
    <property type="term" value="P:rRNA processing"/>
    <property type="evidence" value="ECO:0007669"/>
    <property type="project" value="UniProtKB-UniRule"/>
</dbReference>
<dbReference type="GO" id="GO:0008033">
    <property type="term" value="P:tRNA processing"/>
    <property type="evidence" value="ECO:0007669"/>
    <property type="project" value="UniProtKB-KW"/>
</dbReference>
<dbReference type="CDD" id="cd10845">
    <property type="entry name" value="DSRM_RNAse_III_family"/>
    <property type="match status" value="1"/>
</dbReference>
<dbReference type="CDD" id="cd00593">
    <property type="entry name" value="RIBOc"/>
    <property type="match status" value="1"/>
</dbReference>
<dbReference type="FunFam" id="1.10.1520.10:FF:000001">
    <property type="entry name" value="Ribonuclease 3"/>
    <property type="match status" value="1"/>
</dbReference>
<dbReference type="FunFam" id="3.30.160.20:FF:000003">
    <property type="entry name" value="Ribonuclease 3"/>
    <property type="match status" value="1"/>
</dbReference>
<dbReference type="Gene3D" id="3.30.160.20">
    <property type="match status" value="1"/>
</dbReference>
<dbReference type="Gene3D" id="1.10.1520.10">
    <property type="entry name" value="Ribonuclease III domain"/>
    <property type="match status" value="1"/>
</dbReference>
<dbReference type="HAMAP" id="MF_00104">
    <property type="entry name" value="RNase_III"/>
    <property type="match status" value="1"/>
</dbReference>
<dbReference type="InterPro" id="IPR014720">
    <property type="entry name" value="dsRBD_dom"/>
</dbReference>
<dbReference type="InterPro" id="IPR011907">
    <property type="entry name" value="RNase_III"/>
</dbReference>
<dbReference type="InterPro" id="IPR000999">
    <property type="entry name" value="RNase_III_dom"/>
</dbReference>
<dbReference type="InterPro" id="IPR036389">
    <property type="entry name" value="RNase_III_sf"/>
</dbReference>
<dbReference type="NCBIfam" id="TIGR02191">
    <property type="entry name" value="RNaseIII"/>
    <property type="match status" value="1"/>
</dbReference>
<dbReference type="PANTHER" id="PTHR11207:SF0">
    <property type="entry name" value="RIBONUCLEASE 3"/>
    <property type="match status" value="1"/>
</dbReference>
<dbReference type="PANTHER" id="PTHR11207">
    <property type="entry name" value="RIBONUCLEASE III"/>
    <property type="match status" value="1"/>
</dbReference>
<dbReference type="Pfam" id="PF00035">
    <property type="entry name" value="dsrm"/>
    <property type="match status" value="1"/>
</dbReference>
<dbReference type="Pfam" id="PF14622">
    <property type="entry name" value="Ribonucleas_3_3"/>
    <property type="match status" value="1"/>
</dbReference>
<dbReference type="SMART" id="SM00358">
    <property type="entry name" value="DSRM"/>
    <property type="match status" value="1"/>
</dbReference>
<dbReference type="SMART" id="SM00535">
    <property type="entry name" value="RIBOc"/>
    <property type="match status" value="1"/>
</dbReference>
<dbReference type="SUPFAM" id="SSF54768">
    <property type="entry name" value="dsRNA-binding domain-like"/>
    <property type="match status" value="1"/>
</dbReference>
<dbReference type="SUPFAM" id="SSF69065">
    <property type="entry name" value="RNase III domain-like"/>
    <property type="match status" value="1"/>
</dbReference>
<dbReference type="PROSITE" id="PS50137">
    <property type="entry name" value="DS_RBD"/>
    <property type="match status" value="1"/>
</dbReference>
<dbReference type="PROSITE" id="PS00517">
    <property type="entry name" value="RNASE_3_1"/>
    <property type="match status" value="1"/>
</dbReference>
<dbReference type="PROSITE" id="PS50142">
    <property type="entry name" value="RNASE_3_2"/>
    <property type="match status" value="1"/>
</dbReference>
<accession>B5Z735</accession>
<comment type="function">
    <text evidence="1">Digests double-stranded RNA. Involved in the processing of primary rRNA transcript to yield the immediate precursors to the large and small rRNAs (23S and 16S). Processes some mRNAs, and tRNAs when they are encoded in the rRNA operon. Processes pre-crRNA and tracrRNA of type II CRISPR loci if present in the organism.</text>
</comment>
<comment type="catalytic activity">
    <reaction evidence="1">
        <text>Endonucleolytic cleavage to 5'-phosphomonoester.</text>
        <dbReference type="EC" id="3.1.26.3"/>
    </reaction>
</comment>
<comment type="cofactor">
    <cofactor evidence="1">
        <name>Mg(2+)</name>
        <dbReference type="ChEBI" id="CHEBI:18420"/>
    </cofactor>
</comment>
<comment type="subunit">
    <text evidence="1">Homodimer.</text>
</comment>
<comment type="subcellular location">
    <subcellularLocation>
        <location evidence="1">Cytoplasm</location>
    </subcellularLocation>
</comment>
<comment type="similarity">
    <text evidence="1">Belongs to the ribonuclease III family.</text>
</comment>
<keyword id="KW-0963">Cytoplasm</keyword>
<keyword id="KW-0255">Endonuclease</keyword>
<keyword id="KW-0378">Hydrolase</keyword>
<keyword id="KW-0460">Magnesium</keyword>
<keyword id="KW-0479">Metal-binding</keyword>
<keyword id="KW-0507">mRNA processing</keyword>
<keyword id="KW-0540">Nuclease</keyword>
<keyword id="KW-1185">Reference proteome</keyword>
<keyword id="KW-0694">RNA-binding</keyword>
<keyword id="KW-0698">rRNA processing</keyword>
<keyword id="KW-0699">rRNA-binding</keyword>
<keyword id="KW-0819">tRNA processing</keyword>
<organism>
    <name type="scientific">Helicobacter pylori (strain G27)</name>
    <dbReference type="NCBI Taxonomy" id="563041"/>
    <lineage>
        <taxon>Bacteria</taxon>
        <taxon>Pseudomonadati</taxon>
        <taxon>Campylobacterota</taxon>
        <taxon>Epsilonproteobacteria</taxon>
        <taxon>Campylobacterales</taxon>
        <taxon>Helicobacteraceae</taxon>
        <taxon>Helicobacter</taxon>
    </lineage>
</organism>